<accession>P66326</accession>
<accession>Q8NT11</accession>
<proteinExistence type="inferred from homology"/>
<feature type="chain" id="PRO_0000146524" description="Small ribosomal subunit protein uS10">
    <location>
        <begin position="1"/>
        <end position="101"/>
    </location>
</feature>
<name>RS10_CORGL</name>
<comment type="function">
    <text evidence="1">Involved in the binding of tRNA to the ribosomes.</text>
</comment>
<comment type="subunit">
    <text evidence="1">Part of the 30S ribosomal subunit.</text>
</comment>
<comment type="similarity">
    <text evidence="1">Belongs to the universal ribosomal protein uS10 family.</text>
</comment>
<comment type="sequence caution" evidence="2">
    <conflict type="erroneous initiation">
        <sequence resource="EMBL-CDS" id="CAF19216"/>
    </conflict>
</comment>
<reference key="1">
    <citation type="journal article" date="2003" name="Appl. Microbiol. Biotechnol.">
        <title>The Corynebacterium glutamicum genome: features and impacts on biotechnological processes.</title>
        <authorList>
            <person name="Ikeda M."/>
            <person name="Nakagawa S."/>
        </authorList>
    </citation>
    <scope>NUCLEOTIDE SEQUENCE [LARGE SCALE GENOMIC DNA]</scope>
    <source>
        <strain>ATCC 13032 / DSM 20300 / JCM 1318 / BCRC 11384 / CCUG 27702 / LMG 3730 / NBRC 12168 / NCIMB 10025 / NRRL B-2784 / 534</strain>
    </source>
</reference>
<reference key="2">
    <citation type="journal article" date="2003" name="J. Biotechnol.">
        <title>The complete Corynebacterium glutamicum ATCC 13032 genome sequence and its impact on the production of L-aspartate-derived amino acids and vitamins.</title>
        <authorList>
            <person name="Kalinowski J."/>
            <person name="Bathe B."/>
            <person name="Bartels D."/>
            <person name="Bischoff N."/>
            <person name="Bott M."/>
            <person name="Burkovski A."/>
            <person name="Dusch N."/>
            <person name="Eggeling L."/>
            <person name="Eikmanns B.J."/>
            <person name="Gaigalat L."/>
            <person name="Goesmann A."/>
            <person name="Hartmann M."/>
            <person name="Huthmacher K."/>
            <person name="Kraemer R."/>
            <person name="Linke B."/>
            <person name="McHardy A.C."/>
            <person name="Meyer F."/>
            <person name="Moeckel B."/>
            <person name="Pfefferle W."/>
            <person name="Puehler A."/>
            <person name="Rey D.A."/>
            <person name="Rueckert C."/>
            <person name="Rupp O."/>
            <person name="Sahm H."/>
            <person name="Wendisch V.F."/>
            <person name="Wiegraebe I."/>
            <person name="Tauch A."/>
        </authorList>
    </citation>
    <scope>NUCLEOTIDE SEQUENCE [LARGE SCALE GENOMIC DNA]</scope>
    <source>
        <strain>ATCC 13032 / DSM 20300 / JCM 1318 / BCRC 11384 / CCUG 27702 / LMG 3730 / NBRC 12168 / NCIMB 10025 / NRRL B-2784 / 534</strain>
    </source>
</reference>
<evidence type="ECO:0000255" key="1">
    <source>
        <dbReference type="HAMAP-Rule" id="MF_00508"/>
    </source>
</evidence>
<evidence type="ECO:0000305" key="2"/>
<gene>
    <name evidence="1" type="primary">rpsJ</name>
    <name type="ordered locus">Cgl0504</name>
    <name type="ordered locus">cg0593</name>
</gene>
<dbReference type="EMBL" id="BA000036">
    <property type="protein sequence ID" value="BAB97897.1"/>
    <property type="molecule type" value="Genomic_DNA"/>
</dbReference>
<dbReference type="EMBL" id="BX927149">
    <property type="protein sequence ID" value="CAF19216.1"/>
    <property type="status" value="ALT_INIT"/>
    <property type="molecule type" value="Genomic_DNA"/>
</dbReference>
<dbReference type="RefSeq" id="NP_599747.1">
    <property type="nucleotide sequence ID" value="NC_003450.3"/>
</dbReference>
<dbReference type="RefSeq" id="WP_003854291.1">
    <property type="nucleotide sequence ID" value="NC_006958.1"/>
</dbReference>
<dbReference type="SMR" id="P66326"/>
<dbReference type="STRING" id="196627.cg0593"/>
<dbReference type="GeneID" id="93973422"/>
<dbReference type="KEGG" id="cgb:cg0593"/>
<dbReference type="KEGG" id="cgl:Cgl0504"/>
<dbReference type="PATRIC" id="fig|196627.13.peg.502"/>
<dbReference type="eggNOG" id="COG0051">
    <property type="taxonomic scope" value="Bacteria"/>
</dbReference>
<dbReference type="HOGENOM" id="CLU_122625_1_3_11"/>
<dbReference type="OrthoDB" id="9804464at2"/>
<dbReference type="BioCyc" id="CORYNE:G18NG-10066-MONOMER"/>
<dbReference type="PRO" id="PR:P66326"/>
<dbReference type="Proteomes" id="UP000000582">
    <property type="component" value="Chromosome"/>
</dbReference>
<dbReference type="Proteomes" id="UP000001009">
    <property type="component" value="Chromosome"/>
</dbReference>
<dbReference type="GO" id="GO:1990904">
    <property type="term" value="C:ribonucleoprotein complex"/>
    <property type="evidence" value="ECO:0007669"/>
    <property type="project" value="UniProtKB-KW"/>
</dbReference>
<dbReference type="GO" id="GO:0005840">
    <property type="term" value="C:ribosome"/>
    <property type="evidence" value="ECO:0007669"/>
    <property type="project" value="UniProtKB-KW"/>
</dbReference>
<dbReference type="GO" id="GO:0003735">
    <property type="term" value="F:structural constituent of ribosome"/>
    <property type="evidence" value="ECO:0007669"/>
    <property type="project" value="InterPro"/>
</dbReference>
<dbReference type="GO" id="GO:0000049">
    <property type="term" value="F:tRNA binding"/>
    <property type="evidence" value="ECO:0007669"/>
    <property type="project" value="UniProtKB-UniRule"/>
</dbReference>
<dbReference type="GO" id="GO:0006412">
    <property type="term" value="P:translation"/>
    <property type="evidence" value="ECO:0007669"/>
    <property type="project" value="UniProtKB-UniRule"/>
</dbReference>
<dbReference type="FunFam" id="3.30.70.600:FF:000001">
    <property type="entry name" value="30S ribosomal protein S10"/>
    <property type="match status" value="1"/>
</dbReference>
<dbReference type="Gene3D" id="3.30.70.600">
    <property type="entry name" value="Ribosomal protein S10 domain"/>
    <property type="match status" value="1"/>
</dbReference>
<dbReference type="HAMAP" id="MF_00508">
    <property type="entry name" value="Ribosomal_uS10"/>
    <property type="match status" value="1"/>
</dbReference>
<dbReference type="InterPro" id="IPR001848">
    <property type="entry name" value="Ribosomal_uS10"/>
</dbReference>
<dbReference type="InterPro" id="IPR018268">
    <property type="entry name" value="Ribosomal_uS10_CS"/>
</dbReference>
<dbReference type="InterPro" id="IPR027486">
    <property type="entry name" value="Ribosomal_uS10_dom"/>
</dbReference>
<dbReference type="InterPro" id="IPR036838">
    <property type="entry name" value="Ribosomal_uS10_dom_sf"/>
</dbReference>
<dbReference type="NCBIfam" id="NF001861">
    <property type="entry name" value="PRK00596.1"/>
    <property type="match status" value="1"/>
</dbReference>
<dbReference type="NCBIfam" id="TIGR01049">
    <property type="entry name" value="rpsJ_bact"/>
    <property type="match status" value="1"/>
</dbReference>
<dbReference type="PANTHER" id="PTHR11700">
    <property type="entry name" value="30S RIBOSOMAL PROTEIN S10 FAMILY MEMBER"/>
    <property type="match status" value="1"/>
</dbReference>
<dbReference type="Pfam" id="PF00338">
    <property type="entry name" value="Ribosomal_S10"/>
    <property type="match status" value="1"/>
</dbReference>
<dbReference type="PRINTS" id="PR00971">
    <property type="entry name" value="RIBOSOMALS10"/>
</dbReference>
<dbReference type="SMART" id="SM01403">
    <property type="entry name" value="Ribosomal_S10"/>
    <property type="match status" value="1"/>
</dbReference>
<dbReference type="SUPFAM" id="SSF54999">
    <property type="entry name" value="Ribosomal protein S10"/>
    <property type="match status" value="1"/>
</dbReference>
<dbReference type="PROSITE" id="PS00361">
    <property type="entry name" value="RIBOSOMAL_S10"/>
    <property type="match status" value="1"/>
</dbReference>
<keyword id="KW-1185">Reference proteome</keyword>
<keyword id="KW-0687">Ribonucleoprotein</keyword>
<keyword id="KW-0689">Ribosomal protein</keyword>
<organism>
    <name type="scientific">Corynebacterium glutamicum (strain ATCC 13032 / DSM 20300 / JCM 1318 / BCRC 11384 / CCUG 27702 / LMG 3730 / NBRC 12168 / NCIMB 10025 / NRRL B-2784 / 534)</name>
    <dbReference type="NCBI Taxonomy" id="196627"/>
    <lineage>
        <taxon>Bacteria</taxon>
        <taxon>Bacillati</taxon>
        <taxon>Actinomycetota</taxon>
        <taxon>Actinomycetes</taxon>
        <taxon>Mycobacteriales</taxon>
        <taxon>Corynebacteriaceae</taxon>
        <taxon>Corynebacterium</taxon>
    </lineage>
</organism>
<sequence length="101" mass="11470">MAGQKIRIRLKAYDHEAIDASARKIVETVTRTGARVVGPVPLPTEKNVYAVIRSPHKYKDSREHFEMRTHKRLIDILDPTPKTVDALMRIDLPASVDVNIQ</sequence>
<protein>
    <recommendedName>
        <fullName evidence="1">Small ribosomal subunit protein uS10</fullName>
    </recommendedName>
    <alternativeName>
        <fullName evidence="2">30S ribosomal protein S10</fullName>
    </alternativeName>
</protein>